<feature type="chain" id="PRO_0000254162" description="Aspartate beta-hydroxylase domain-containing protein 2">
    <location>
        <begin position="1"/>
        <end position="369"/>
    </location>
</feature>
<feature type="topological domain" description="Cytoplasmic" evidence="2">
    <location>
        <begin position="1"/>
        <end position="58"/>
    </location>
</feature>
<feature type="transmembrane region" description="Helical" evidence="2">
    <location>
        <begin position="59"/>
        <end position="79"/>
    </location>
</feature>
<feature type="topological domain" description="Lumenal" evidence="2">
    <location>
        <begin position="80"/>
        <end position="369"/>
    </location>
</feature>
<feature type="binding site" evidence="1">
    <location>
        <position position="228"/>
    </location>
    <ligand>
        <name>2-oxoglutarate</name>
        <dbReference type="ChEBI" id="CHEBI:16810"/>
    </ligand>
</feature>
<feature type="binding site" evidence="1">
    <location>
        <position position="272"/>
    </location>
    <ligand>
        <name>2-oxoglutarate</name>
        <dbReference type="ChEBI" id="CHEBI:16810"/>
    </ligand>
</feature>
<feature type="binding site" evidence="1">
    <location>
        <position position="283"/>
    </location>
    <ligand>
        <name>Fe cation</name>
        <dbReference type="ChEBI" id="CHEBI:24875"/>
    </ligand>
</feature>
<feature type="binding site" evidence="1">
    <location>
        <begin position="292"/>
        <end position="294"/>
    </location>
    <ligand>
        <name>2-oxoglutarate</name>
        <dbReference type="ChEBI" id="CHEBI:16810"/>
    </ligand>
</feature>
<feature type="binding site" evidence="1">
    <location>
        <position position="328"/>
    </location>
    <ligand>
        <name>Fe cation</name>
        <dbReference type="ChEBI" id="CHEBI:24875"/>
    </ligand>
</feature>
<feature type="binding site" evidence="1">
    <location>
        <position position="341"/>
    </location>
    <ligand>
        <name>2-oxoglutarate</name>
        <dbReference type="ChEBI" id="CHEBI:16810"/>
    </ligand>
</feature>
<feature type="glycosylation site" description="N-linked (GlcNAc...) asparagine" evidence="2">
    <location>
        <position position="211"/>
    </location>
</feature>
<feature type="sequence variant" id="VAR_060123" description="In dbSNP:rs34902186.">
    <original>N</original>
    <variation>S</variation>
    <location>
        <position position="235"/>
    </location>
</feature>
<reference key="1">
    <citation type="journal article" date="2004" name="Genome Biol.">
        <title>A genome annotation-driven approach to cloning the human ORFeome.</title>
        <authorList>
            <person name="Collins J.E."/>
            <person name="Wright C.L."/>
            <person name="Edwards C.A."/>
            <person name="Davis M.P."/>
            <person name="Grinham J.A."/>
            <person name="Cole C.G."/>
            <person name="Goward M.E."/>
            <person name="Aguado B."/>
            <person name="Mallya M."/>
            <person name="Mokrab Y."/>
            <person name="Huckle E.J."/>
            <person name="Beare D.M."/>
            <person name="Dunham I."/>
        </authorList>
    </citation>
    <scope>NUCLEOTIDE SEQUENCE [LARGE SCALE MRNA]</scope>
</reference>
<reference key="2">
    <citation type="journal article" date="2004" name="Nat. Genet.">
        <title>Complete sequencing and characterization of 21,243 full-length human cDNAs.</title>
        <authorList>
            <person name="Ota T."/>
            <person name="Suzuki Y."/>
            <person name="Nishikawa T."/>
            <person name="Otsuki T."/>
            <person name="Sugiyama T."/>
            <person name="Irie R."/>
            <person name="Wakamatsu A."/>
            <person name="Hayashi K."/>
            <person name="Sato H."/>
            <person name="Nagai K."/>
            <person name="Kimura K."/>
            <person name="Makita H."/>
            <person name="Sekine M."/>
            <person name="Obayashi M."/>
            <person name="Nishi T."/>
            <person name="Shibahara T."/>
            <person name="Tanaka T."/>
            <person name="Ishii S."/>
            <person name="Yamamoto J."/>
            <person name="Saito K."/>
            <person name="Kawai Y."/>
            <person name="Isono Y."/>
            <person name="Nakamura Y."/>
            <person name="Nagahari K."/>
            <person name="Murakami K."/>
            <person name="Yasuda T."/>
            <person name="Iwayanagi T."/>
            <person name="Wagatsuma M."/>
            <person name="Shiratori A."/>
            <person name="Sudo H."/>
            <person name="Hosoiri T."/>
            <person name="Kaku Y."/>
            <person name="Kodaira H."/>
            <person name="Kondo H."/>
            <person name="Sugawara M."/>
            <person name="Takahashi M."/>
            <person name="Kanda K."/>
            <person name="Yokoi T."/>
            <person name="Furuya T."/>
            <person name="Kikkawa E."/>
            <person name="Omura Y."/>
            <person name="Abe K."/>
            <person name="Kamihara K."/>
            <person name="Katsuta N."/>
            <person name="Sato K."/>
            <person name="Tanikawa M."/>
            <person name="Yamazaki M."/>
            <person name="Ninomiya K."/>
            <person name="Ishibashi T."/>
            <person name="Yamashita H."/>
            <person name="Murakawa K."/>
            <person name="Fujimori K."/>
            <person name="Tanai H."/>
            <person name="Kimata M."/>
            <person name="Watanabe M."/>
            <person name="Hiraoka S."/>
            <person name="Chiba Y."/>
            <person name="Ishida S."/>
            <person name="Ono Y."/>
            <person name="Takiguchi S."/>
            <person name="Watanabe S."/>
            <person name="Yosida M."/>
            <person name="Hotuta T."/>
            <person name="Kusano J."/>
            <person name="Kanehori K."/>
            <person name="Takahashi-Fujii A."/>
            <person name="Hara H."/>
            <person name="Tanase T.-O."/>
            <person name="Nomura Y."/>
            <person name="Togiya S."/>
            <person name="Komai F."/>
            <person name="Hara R."/>
            <person name="Takeuchi K."/>
            <person name="Arita M."/>
            <person name="Imose N."/>
            <person name="Musashino K."/>
            <person name="Yuuki H."/>
            <person name="Oshima A."/>
            <person name="Sasaki N."/>
            <person name="Aotsuka S."/>
            <person name="Yoshikawa Y."/>
            <person name="Matsunawa H."/>
            <person name="Ichihara T."/>
            <person name="Shiohata N."/>
            <person name="Sano S."/>
            <person name="Moriya S."/>
            <person name="Momiyama H."/>
            <person name="Satoh N."/>
            <person name="Takami S."/>
            <person name="Terashima Y."/>
            <person name="Suzuki O."/>
            <person name="Nakagawa S."/>
            <person name="Senoh A."/>
            <person name="Mizoguchi H."/>
            <person name="Goto Y."/>
            <person name="Shimizu F."/>
            <person name="Wakebe H."/>
            <person name="Hishigaki H."/>
            <person name="Watanabe T."/>
            <person name="Sugiyama A."/>
            <person name="Takemoto M."/>
            <person name="Kawakami B."/>
            <person name="Yamazaki M."/>
            <person name="Watanabe K."/>
            <person name="Kumagai A."/>
            <person name="Itakura S."/>
            <person name="Fukuzumi Y."/>
            <person name="Fujimori Y."/>
            <person name="Komiyama M."/>
            <person name="Tashiro H."/>
            <person name="Tanigami A."/>
            <person name="Fujiwara T."/>
            <person name="Ono T."/>
            <person name="Yamada K."/>
            <person name="Fujii Y."/>
            <person name="Ozaki K."/>
            <person name="Hirao M."/>
            <person name="Ohmori Y."/>
            <person name="Kawabata A."/>
            <person name="Hikiji T."/>
            <person name="Kobatake N."/>
            <person name="Inagaki H."/>
            <person name="Ikema Y."/>
            <person name="Okamoto S."/>
            <person name="Okitani R."/>
            <person name="Kawakami T."/>
            <person name="Noguchi S."/>
            <person name="Itoh T."/>
            <person name="Shigeta K."/>
            <person name="Senba T."/>
            <person name="Matsumura K."/>
            <person name="Nakajima Y."/>
            <person name="Mizuno T."/>
            <person name="Morinaga M."/>
            <person name="Sasaki M."/>
            <person name="Togashi T."/>
            <person name="Oyama M."/>
            <person name="Hata H."/>
            <person name="Watanabe M."/>
            <person name="Komatsu T."/>
            <person name="Mizushima-Sugano J."/>
            <person name="Satoh T."/>
            <person name="Shirai Y."/>
            <person name="Takahashi Y."/>
            <person name="Nakagawa K."/>
            <person name="Okumura K."/>
            <person name="Nagase T."/>
            <person name="Nomura N."/>
            <person name="Kikuchi H."/>
            <person name="Masuho Y."/>
            <person name="Yamashita R."/>
            <person name="Nakai K."/>
            <person name="Yada T."/>
            <person name="Nakamura Y."/>
            <person name="Ohara O."/>
            <person name="Isogai T."/>
            <person name="Sugano S."/>
        </authorList>
    </citation>
    <scope>NUCLEOTIDE SEQUENCE [LARGE SCALE MRNA]</scope>
    <source>
        <tissue>Cerebellum</tissue>
    </source>
</reference>
<reference key="3">
    <citation type="journal article" date="1999" name="Nature">
        <title>The DNA sequence of human chromosome 22.</title>
        <authorList>
            <person name="Dunham I."/>
            <person name="Hunt A.R."/>
            <person name="Collins J.E."/>
            <person name="Bruskiewich R."/>
            <person name="Beare D.M."/>
            <person name="Clamp M."/>
            <person name="Smink L.J."/>
            <person name="Ainscough R."/>
            <person name="Almeida J.P."/>
            <person name="Babbage A.K."/>
            <person name="Bagguley C."/>
            <person name="Bailey J."/>
            <person name="Barlow K.F."/>
            <person name="Bates K.N."/>
            <person name="Beasley O.P."/>
            <person name="Bird C.P."/>
            <person name="Blakey S.E."/>
            <person name="Bridgeman A.M."/>
            <person name="Buck D."/>
            <person name="Burgess J."/>
            <person name="Burrill W.D."/>
            <person name="Burton J."/>
            <person name="Carder C."/>
            <person name="Carter N.P."/>
            <person name="Chen Y."/>
            <person name="Clark G."/>
            <person name="Clegg S.M."/>
            <person name="Cobley V.E."/>
            <person name="Cole C.G."/>
            <person name="Collier R.E."/>
            <person name="Connor R."/>
            <person name="Conroy D."/>
            <person name="Corby N.R."/>
            <person name="Coville G.J."/>
            <person name="Cox A.V."/>
            <person name="Davis J."/>
            <person name="Dawson E."/>
            <person name="Dhami P.D."/>
            <person name="Dockree C."/>
            <person name="Dodsworth S.J."/>
            <person name="Durbin R.M."/>
            <person name="Ellington A.G."/>
            <person name="Evans K.L."/>
            <person name="Fey J.M."/>
            <person name="Fleming K."/>
            <person name="French L."/>
            <person name="Garner A.A."/>
            <person name="Gilbert J.G.R."/>
            <person name="Goward M.E."/>
            <person name="Grafham D.V."/>
            <person name="Griffiths M.N.D."/>
            <person name="Hall C."/>
            <person name="Hall R.E."/>
            <person name="Hall-Tamlyn G."/>
            <person name="Heathcott R.W."/>
            <person name="Ho S."/>
            <person name="Holmes S."/>
            <person name="Hunt S.E."/>
            <person name="Jones M.C."/>
            <person name="Kershaw J."/>
            <person name="Kimberley A.M."/>
            <person name="King A."/>
            <person name="Laird G.K."/>
            <person name="Langford C.F."/>
            <person name="Leversha M.A."/>
            <person name="Lloyd C."/>
            <person name="Lloyd D.M."/>
            <person name="Martyn I.D."/>
            <person name="Mashreghi-Mohammadi M."/>
            <person name="Matthews L.H."/>
            <person name="Mccann O.T."/>
            <person name="Mcclay J."/>
            <person name="Mclaren S."/>
            <person name="McMurray A.A."/>
            <person name="Milne S.A."/>
            <person name="Mortimore B.J."/>
            <person name="Odell C.N."/>
            <person name="Pavitt R."/>
            <person name="Pearce A.V."/>
            <person name="Pearson D."/>
            <person name="Phillimore B.J.C.T."/>
            <person name="Phillips S.H."/>
            <person name="Plumb R.W."/>
            <person name="Ramsay H."/>
            <person name="Ramsey Y."/>
            <person name="Rogers L."/>
            <person name="Ross M.T."/>
            <person name="Scott C.E."/>
            <person name="Sehra H.K."/>
            <person name="Skuce C.D."/>
            <person name="Smalley S."/>
            <person name="Smith M.L."/>
            <person name="Soderlund C."/>
            <person name="Spragon L."/>
            <person name="Steward C.A."/>
            <person name="Sulston J.E."/>
            <person name="Swann R.M."/>
            <person name="Vaudin M."/>
            <person name="Wall M."/>
            <person name="Wallis J.M."/>
            <person name="Whiteley M.N."/>
            <person name="Willey D.L."/>
            <person name="Williams L."/>
            <person name="Williams S.A."/>
            <person name="Williamson H."/>
            <person name="Wilmer T.E."/>
            <person name="Wilming L."/>
            <person name="Wright C.L."/>
            <person name="Hubbard T."/>
            <person name="Bentley D.R."/>
            <person name="Beck S."/>
            <person name="Rogers J."/>
            <person name="Shimizu N."/>
            <person name="Minoshima S."/>
            <person name="Kawasaki K."/>
            <person name="Sasaki T."/>
            <person name="Asakawa S."/>
            <person name="Kudoh J."/>
            <person name="Shintani A."/>
            <person name="Shibuya K."/>
            <person name="Yoshizaki Y."/>
            <person name="Aoki N."/>
            <person name="Mitsuyama S."/>
            <person name="Roe B.A."/>
            <person name="Chen F."/>
            <person name="Chu L."/>
            <person name="Crabtree J."/>
            <person name="Deschamps S."/>
            <person name="Do A."/>
            <person name="Do T."/>
            <person name="Dorman A."/>
            <person name="Fang F."/>
            <person name="Fu Y."/>
            <person name="Hu P."/>
            <person name="Hua A."/>
            <person name="Kenton S."/>
            <person name="Lai H."/>
            <person name="Lao H.I."/>
            <person name="Lewis J."/>
            <person name="Lewis S."/>
            <person name="Lin S.-P."/>
            <person name="Loh P."/>
            <person name="Malaj E."/>
            <person name="Nguyen T."/>
            <person name="Pan H."/>
            <person name="Phan S."/>
            <person name="Qi S."/>
            <person name="Qian Y."/>
            <person name="Ray L."/>
            <person name="Ren Q."/>
            <person name="Shaull S."/>
            <person name="Sloan D."/>
            <person name="Song L."/>
            <person name="Wang Q."/>
            <person name="Wang Y."/>
            <person name="Wang Z."/>
            <person name="White J."/>
            <person name="Willingham D."/>
            <person name="Wu H."/>
            <person name="Yao Z."/>
            <person name="Zhan M."/>
            <person name="Zhang G."/>
            <person name="Chissoe S."/>
            <person name="Murray J."/>
            <person name="Miller N."/>
            <person name="Minx P."/>
            <person name="Fulton R."/>
            <person name="Johnson D."/>
            <person name="Bemis G."/>
            <person name="Bentley D."/>
            <person name="Bradshaw H."/>
            <person name="Bourne S."/>
            <person name="Cordes M."/>
            <person name="Du Z."/>
            <person name="Fulton L."/>
            <person name="Goela D."/>
            <person name="Graves T."/>
            <person name="Hawkins J."/>
            <person name="Hinds K."/>
            <person name="Kemp K."/>
            <person name="Latreille P."/>
            <person name="Layman D."/>
            <person name="Ozersky P."/>
            <person name="Rohlfing T."/>
            <person name="Scheet P."/>
            <person name="Walker C."/>
            <person name="Wamsley A."/>
            <person name="Wohldmann P."/>
            <person name="Pepin K."/>
            <person name="Nelson J."/>
            <person name="Korf I."/>
            <person name="Bedell J.A."/>
            <person name="Hillier L.W."/>
            <person name="Mardis E."/>
            <person name="Waterston R."/>
            <person name="Wilson R."/>
            <person name="Emanuel B.S."/>
            <person name="Shaikh T."/>
            <person name="Kurahashi H."/>
            <person name="Saitta S."/>
            <person name="Budarf M.L."/>
            <person name="McDermid H.E."/>
            <person name="Johnson A."/>
            <person name="Wong A.C.C."/>
            <person name="Morrow B.E."/>
            <person name="Edelmann L."/>
            <person name="Kim U.J."/>
            <person name="Shizuya H."/>
            <person name="Simon M.I."/>
            <person name="Dumanski J.P."/>
            <person name="Peyrard M."/>
            <person name="Kedra D."/>
            <person name="Seroussi E."/>
            <person name="Fransson I."/>
            <person name="Tapia I."/>
            <person name="Bruder C.E."/>
            <person name="O'Brien K.P."/>
            <person name="Wilkinson P."/>
            <person name="Bodenteich A."/>
            <person name="Hartman K."/>
            <person name="Hu X."/>
            <person name="Khan A.S."/>
            <person name="Lane L."/>
            <person name="Tilahun Y."/>
            <person name="Wright H."/>
        </authorList>
    </citation>
    <scope>NUCLEOTIDE SEQUENCE [LARGE SCALE GENOMIC DNA]</scope>
</reference>
<reference key="4">
    <citation type="journal article" date="2004" name="Genome Res.">
        <title>The status, quality, and expansion of the NIH full-length cDNA project: the Mammalian Gene Collection (MGC).</title>
        <authorList>
            <consortium name="The MGC Project Team"/>
        </authorList>
    </citation>
    <scope>NUCLEOTIDE SEQUENCE [LARGE SCALE MRNA]</scope>
</reference>
<reference key="5">
    <citation type="journal article" date="2007" name="BMC Genomics">
        <title>The full-ORF clone resource of the German cDNA consortium.</title>
        <authorList>
            <person name="Bechtel S."/>
            <person name="Rosenfelder H."/>
            <person name="Duda A."/>
            <person name="Schmidt C.P."/>
            <person name="Ernst U."/>
            <person name="Wellenreuther R."/>
            <person name="Mehrle A."/>
            <person name="Schuster C."/>
            <person name="Bahr A."/>
            <person name="Bloecker H."/>
            <person name="Heubner D."/>
            <person name="Hoerlein A."/>
            <person name="Michel G."/>
            <person name="Wedler H."/>
            <person name="Koehrer K."/>
            <person name="Ottenwaelder B."/>
            <person name="Poustka A."/>
            <person name="Wiemann S."/>
            <person name="Schupp I."/>
        </authorList>
    </citation>
    <scope>NUCLEOTIDE SEQUENCE [LARGE SCALE MRNA] OF 184-369</scope>
    <source>
        <tissue>Amygdala</tissue>
    </source>
</reference>
<protein>
    <recommendedName>
        <fullName>Aspartate beta-hydroxylase domain-containing protein 2</fullName>
        <ecNumber>1.14.11.-</ecNumber>
    </recommendedName>
</protein>
<dbReference type="EC" id="1.14.11.-"/>
<dbReference type="EMBL" id="CR456391">
    <property type="protein sequence ID" value="CAG30277.1"/>
    <property type="molecule type" value="mRNA"/>
</dbReference>
<dbReference type="EMBL" id="AK315112">
    <property type="protein sequence ID" value="BAG37570.1"/>
    <property type="status" value="ALT_INIT"/>
    <property type="molecule type" value="mRNA"/>
</dbReference>
<dbReference type="EMBL" id="Z99714">
    <property type="protein sequence ID" value="CAI17879.1"/>
    <property type="molecule type" value="Genomic_DNA"/>
</dbReference>
<dbReference type="EMBL" id="BC036753">
    <property type="protein sequence ID" value="AAH36753.1"/>
    <property type="status" value="ALT_INIT"/>
    <property type="molecule type" value="mRNA"/>
</dbReference>
<dbReference type="EMBL" id="AL161993">
    <property type="protein sequence ID" value="CAB82325.1"/>
    <property type="molecule type" value="mRNA"/>
</dbReference>
<dbReference type="CCDS" id="CCDS13834.2"/>
<dbReference type="PIR" id="T47148">
    <property type="entry name" value="T47148"/>
</dbReference>
<dbReference type="RefSeq" id="NP_065170.2">
    <property type="nucleotide sequence ID" value="NM_020437.5"/>
</dbReference>
<dbReference type="SMR" id="Q6ICH7"/>
<dbReference type="BioGRID" id="121421">
    <property type="interactions" value="36"/>
</dbReference>
<dbReference type="FunCoup" id="Q6ICH7">
    <property type="interactions" value="679"/>
</dbReference>
<dbReference type="IntAct" id="Q6ICH7">
    <property type="interactions" value="32"/>
</dbReference>
<dbReference type="STRING" id="9606.ENSP00000215906"/>
<dbReference type="GlyCosmos" id="Q6ICH7">
    <property type="glycosylation" value="1 site, No reported glycans"/>
</dbReference>
<dbReference type="GlyGen" id="Q6ICH7">
    <property type="glycosylation" value="1 site"/>
</dbReference>
<dbReference type="iPTMnet" id="Q6ICH7"/>
<dbReference type="PhosphoSitePlus" id="Q6ICH7"/>
<dbReference type="BioMuta" id="ASPHD2"/>
<dbReference type="DMDM" id="74757726"/>
<dbReference type="jPOST" id="Q6ICH7"/>
<dbReference type="MassIVE" id="Q6ICH7"/>
<dbReference type="PaxDb" id="9606-ENSP00000215906"/>
<dbReference type="PeptideAtlas" id="Q6ICH7"/>
<dbReference type="ProteomicsDB" id="66392"/>
<dbReference type="Pumba" id="Q6ICH7"/>
<dbReference type="Antibodypedia" id="212">
    <property type="antibodies" value="102 antibodies from 17 providers"/>
</dbReference>
<dbReference type="DNASU" id="57168"/>
<dbReference type="Ensembl" id="ENST00000215906.6">
    <property type="protein sequence ID" value="ENSP00000215906.5"/>
    <property type="gene ID" value="ENSG00000128203.7"/>
</dbReference>
<dbReference type="GeneID" id="57168"/>
<dbReference type="KEGG" id="hsa:57168"/>
<dbReference type="MANE-Select" id="ENST00000215906.6">
    <property type="protein sequence ID" value="ENSP00000215906.5"/>
    <property type="RefSeq nucleotide sequence ID" value="NM_020437.5"/>
    <property type="RefSeq protein sequence ID" value="NP_065170.2"/>
</dbReference>
<dbReference type="UCSC" id="uc003acg.3">
    <property type="organism name" value="human"/>
</dbReference>
<dbReference type="AGR" id="HGNC:30437"/>
<dbReference type="CTD" id="57168"/>
<dbReference type="GeneCards" id="ASPHD2"/>
<dbReference type="HGNC" id="HGNC:30437">
    <property type="gene designation" value="ASPHD2"/>
</dbReference>
<dbReference type="HPA" id="ENSG00000128203">
    <property type="expression patterns" value="Tissue enhanced (brain, skin)"/>
</dbReference>
<dbReference type="neXtProt" id="NX_Q6ICH7"/>
<dbReference type="OpenTargets" id="ENSG00000128203"/>
<dbReference type="PharmGKB" id="PA143485314"/>
<dbReference type="VEuPathDB" id="HostDB:ENSG00000128203"/>
<dbReference type="eggNOG" id="KOG3696">
    <property type="taxonomic scope" value="Eukaryota"/>
</dbReference>
<dbReference type="GeneTree" id="ENSGT00940000159252"/>
<dbReference type="HOGENOM" id="CLU_059279_3_0_1"/>
<dbReference type="InParanoid" id="Q6ICH7"/>
<dbReference type="OMA" id="HIPSKDC"/>
<dbReference type="OrthoDB" id="438431at2759"/>
<dbReference type="PAN-GO" id="Q6ICH7">
    <property type="GO annotations" value="0 GO annotations based on evolutionary models"/>
</dbReference>
<dbReference type="PhylomeDB" id="Q6ICH7"/>
<dbReference type="TreeFam" id="TF312799"/>
<dbReference type="PathwayCommons" id="Q6ICH7"/>
<dbReference type="SignaLink" id="Q6ICH7"/>
<dbReference type="BioGRID-ORCS" id="57168">
    <property type="hits" value="10 hits in 1149 CRISPR screens"/>
</dbReference>
<dbReference type="ChiTaRS" id="ASPHD2">
    <property type="organism name" value="human"/>
</dbReference>
<dbReference type="GenomeRNAi" id="57168"/>
<dbReference type="Pharos" id="Q6ICH7">
    <property type="development level" value="Tdark"/>
</dbReference>
<dbReference type="PRO" id="PR:Q6ICH7"/>
<dbReference type="Proteomes" id="UP000005640">
    <property type="component" value="Chromosome 22"/>
</dbReference>
<dbReference type="RNAct" id="Q6ICH7">
    <property type="molecule type" value="protein"/>
</dbReference>
<dbReference type="Bgee" id="ENSG00000128203">
    <property type="expression patterns" value="Expressed in secondary oocyte and 139 other cell types or tissues"/>
</dbReference>
<dbReference type="ExpressionAtlas" id="Q6ICH7">
    <property type="expression patterns" value="baseline and differential"/>
</dbReference>
<dbReference type="GO" id="GO:0016020">
    <property type="term" value="C:membrane"/>
    <property type="evidence" value="ECO:0007005"/>
    <property type="project" value="UniProtKB"/>
</dbReference>
<dbReference type="GO" id="GO:0051213">
    <property type="term" value="F:dioxygenase activity"/>
    <property type="evidence" value="ECO:0007669"/>
    <property type="project" value="UniProtKB-KW"/>
</dbReference>
<dbReference type="GO" id="GO:0046872">
    <property type="term" value="F:metal ion binding"/>
    <property type="evidence" value="ECO:0007669"/>
    <property type="project" value="UniProtKB-KW"/>
</dbReference>
<dbReference type="FunFam" id="2.60.120.330:FF:000011">
    <property type="entry name" value="Aspartate beta-hydroxylase domain-containing protein 2"/>
    <property type="match status" value="1"/>
</dbReference>
<dbReference type="Gene3D" id="2.60.120.330">
    <property type="entry name" value="B-lactam Antibiotic, Isopenicillin N Synthase, Chain"/>
    <property type="match status" value="1"/>
</dbReference>
<dbReference type="InterPro" id="IPR007803">
    <property type="entry name" value="Asp/Arg/Pro-Hydrxlase"/>
</dbReference>
<dbReference type="InterPro" id="IPR051821">
    <property type="entry name" value="Asp/Asn_beta-hydroxylase"/>
</dbReference>
<dbReference type="InterPro" id="IPR027443">
    <property type="entry name" value="IPNS-like_sf"/>
</dbReference>
<dbReference type="PANTHER" id="PTHR46332">
    <property type="entry name" value="ASPARTATE BETA-HYDROXYLASE DOMAIN-CONTAINING PROTEIN 2"/>
    <property type="match status" value="1"/>
</dbReference>
<dbReference type="PANTHER" id="PTHR46332:SF3">
    <property type="entry name" value="ASPARTATE BETA-HYDROXYLASE DOMAIN-CONTAINING PROTEIN 2"/>
    <property type="match status" value="1"/>
</dbReference>
<dbReference type="Pfam" id="PF05118">
    <property type="entry name" value="Asp_Arg_Hydrox"/>
    <property type="match status" value="1"/>
</dbReference>
<dbReference type="SUPFAM" id="SSF51197">
    <property type="entry name" value="Clavaminate synthase-like"/>
    <property type="match status" value="1"/>
</dbReference>
<sequence>MVWAPLGPPRTDCLTLLHTPSKDSPKMSLEWLVAWSWSLDGLRDCIATGIQSVRDCDTTAVITVACLLVLFVWYCYHVGREQPRPYVSVNSLMQAADANGLQNGYVYCQSPECVRCTHNEGLNQKLYHNLQEYAKRYSWSGMGRIHKGIREQGRYLNSRPSIQKPEVFFLPDLPTTPYFSRDAQKHDVEVLERNFQTILCEFETLYKAFSNCSLPQGWKMNSTPSGEWFTFYLVNQGVCVPRNCRKCPRTYRLLGSLRTCIGNNVFGNACISVLSPGTVITEHYGPTNIRIRCHLGLKTPNGCELVVGGEPQCWAEGRCLLFDDSFLHAAFHEGSAEDGPRVVFMVDLWHPNVAAAERQALDFIFAPGR</sequence>
<proteinExistence type="evidence at protein level"/>
<evidence type="ECO:0000250" key="1"/>
<evidence type="ECO:0000255" key="2"/>
<evidence type="ECO:0000305" key="3"/>
<accession>Q6ICH7</accession>
<accession>B2RCH3</accession>
<accession>Q7L0W3</accession>
<accession>Q9NSN3</accession>
<organism>
    <name type="scientific">Homo sapiens</name>
    <name type="common">Human</name>
    <dbReference type="NCBI Taxonomy" id="9606"/>
    <lineage>
        <taxon>Eukaryota</taxon>
        <taxon>Metazoa</taxon>
        <taxon>Chordata</taxon>
        <taxon>Craniata</taxon>
        <taxon>Vertebrata</taxon>
        <taxon>Euteleostomi</taxon>
        <taxon>Mammalia</taxon>
        <taxon>Eutheria</taxon>
        <taxon>Euarchontoglires</taxon>
        <taxon>Primates</taxon>
        <taxon>Haplorrhini</taxon>
        <taxon>Catarrhini</taxon>
        <taxon>Hominidae</taxon>
        <taxon>Homo</taxon>
    </lineage>
</organism>
<name>ASPH2_HUMAN</name>
<gene>
    <name type="primary">ASPHD2</name>
</gene>
<keyword id="KW-0223">Dioxygenase</keyword>
<keyword id="KW-0325">Glycoprotein</keyword>
<keyword id="KW-0408">Iron</keyword>
<keyword id="KW-0472">Membrane</keyword>
<keyword id="KW-0479">Metal-binding</keyword>
<keyword id="KW-0560">Oxidoreductase</keyword>
<keyword id="KW-1267">Proteomics identification</keyword>
<keyword id="KW-1185">Reference proteome</keyword>
<keyword id="KW-0735">Signal-anchor</keyword>
<keyword id="KW-0812">Transmembrane</keyword>
<keyword id="KW-1133">Transmembrane helix</keyword>
<comment type="function">
    <text evidence="1">May function as 2-oxoglutarate-dependent dioxygenase.</text>
</comment>
<comment type="cofactor">
    <cofactor evidence="1">
        <name>Fe cation</name>
        <dbReference type="ChEBI" id="CHEBI:24875"/>
    </cofactor>
</comment>
<comment type="interaction">
    <interactant intactId="EBI-21519158">
        <id>Q6ICH7</id>
    </interactant>
    <interactant intactId="EBI-11090967">
        <id>O75063</id>
        <label>FAM20B</label>
    </interactant>
    <organismsDiffer>false</organismsDiffer>
    <experiments>2</experiments>
</comment>
<comment type="subcellular location">
    <subcellularLocation>
        <location evidence="3">Membrane</location>
        <topology evidence="3">Single-pass type II membrane protein</topology>
    </subcellularLocation>
</comment>
<comment type="similarity">
    <text evidence="3">Belongs to the aspartyl/asparaginyl beta-hydroxylase family.</text>
</comment>
<comment type="sequence caution" evidence="3">
    <conflict type="erroneous initiation">
        <sequence resource="EMBL-CDS" id="AAH36753"/>
    </conflict>
    <text>Truncated N-terminus.</text>
</comment>
<comment type="sequence caution" evidence="3">
    <conflict type="erroneous initiation">
        <sequence resource="EMBL-CDS" id="BAG37570"/>
    </conflict>
    <text>Truncated N-terminus.</text>
</comment>